<proteinExistence type="inferred from homology"/>
<gene>
    <name evidence="1" type="primary">thyA</name>
    <name type="ordered locus">OEOE_0782</name>
</gene>
<organism>
    <name type="scientific">Oenococcus oeni (strain ATCC BAA-331 / PSU-1)</name>
    <dbReference type="NCBI Taxonomy" id="203123"/>
    <lineage>
        <taxon>Bacteria</taxon>
        <taxon>Bacillati</taxon>
        <taxon>Bacillota</taxon>
        <taxon>Bacilli</taxon>
        <taxon>Lactobacillales</taxon>
        <taxon>Lactobacillaceae</taxon>
        <taxon>Oenococcus</taxon>
    </lineage>
</organism>
<keyword id="KW-0963">Cytoplasm</keyword>
<keyword id="KW-0489">Methyltransferase</keyword>
<keyword id="KW-0545">Nucleotide biosynthesis</keyword>
<keyword id="KW-1185">Reference proteome</keyword>
<keyword id="KW-0808">Transferase</keyword>
<accession>Q04FR4</accession>
<protein>
    <recommendedName>
        <fullName evidence="1">Thymidylate synthase</fullName>
        <shortName evidence="1">TS</shortName>
        <shortName evidence="1">TSase</shortName>
        <ecNumber evidence="1">2.1.1.45</ecNumber>
    </recommendedName>
</protein>
<reference key="1">
    <citation type="journal article" date="2006" name="Proc. Natl. Acad. Sci. U.S.A.">
        <title>Comparative genomics of the lactic acid bacteria.</title>
        <authorList>
            <person name="Makarova K.S."/>
            <person name="Slesarev A."/>
            <person name="Wolf Y.I."/>
            <person name="Sorokin A."/>
            <person name="Mirkin B."/>
            <person name="Koonin E.V."/>
            <person name="Pavlov A."/>
            <person name="Pavlova N."/>
            <person name="Karamychev V."/>
            <person name="Polouchine N."/>
            <person name="Shakhova V."/>
            <person name="Grigoriev I."/>
            <person name="Lou Y."/>
            <person name="Rohksar D."/>
            <person name="Lucas S."/>
            <person name="Huang K."/>
            <person name="Goodstein D.M."/>
            <person name="Hawkins T."/>
            <person name="Plengvidhya V."/>
            <person name="Welker D."/>
            <person name="Hughes J."/>
            <person name="Goh Y."/>
            <person name="Benson A."/>
            <person name="Baldwin K."/>
            <person name="Lee J.-H."/>
            <person name="Diaz-Muniz I."/>
            <person name="Dosti B."/>
            <person name="Smeianov V."/>
            <person name="Wechter W."/>
            <person name="Barabote R."/>
            <person name="Lorca G."/>
            <person name="Altermann E."/>
            <person name="Barrangou R."/>
            <person name="Ganesan B."/>
            <person name="Xie Y."/>
            <person name="Rawsthorne H."/>
            <person name="Tamir D."/>
            <person name="Parker C."/>
            <person name="Breidt F."/>
            <person name="Broadbent J.R."/>
            <person name="Hutkins R."/>
            <person name="O'Sullivan D."/>
            <person name="Steele J."/>
            <person name="Unlu G."/>
            <person name="Saier M.H. Jr."/>
            <person name="Klaenhammer T."/>
            <person name="Richardson P."/>
            <person name="Kozyavkin S."/>
            <person name="Weimer B.C."/>
            <person name="Mills D.A."/>
        </authorList>
    </citation>
    <scope>NUCLEOTIDE SEQUENCE [LARGE SCALE GENOMIC DNA]</scope>
    <source>
        <strain>ATCC BAA-331 / PSU-1</strain>
    </source>
</reference>
<feature type="chain" id="PRO_1000000645" description="Thymidylate synthase">
    <location>
        <begin position="1"/>
        <end position="319"/>
    </location>
</feature>
<feature type="active site" description="Nucleophile" evidence="1">
    <location>
        <position position="201"/>
    </location>
</feature>
<feature type="binding site" description="in other chain" evidence="1">
    <location>
        <position position="25"/>
    </location>
    <ligand>
        <name>dUMP</name>
        <dbReference type="ChEBI" id="CHEBI:246422"/>
        <note>ligand shared between dimeric partners</note>
    </ligand>
</feature>
<feature type="binding site" evidence="1">
    <location>
        <begin position="181"/>
        <end position="182"/>
    </location>
    <ligand>
        <name>dUMP</name>
        <dbReference type="ChEBI" id="CHEBI:246422"/>
        <note>ligand shared between dimeric partners</note>
    </ligand>
</feature>
<feature type="binding site" description="in other chain" evidence="1">
    <location>
        <begin position="221"/>
        <end position="224"/>
    </location>
    <ligand>
        <name>dUMP</name>
        <dbReference type="ChEBI" id="CHEBI:246422"/>
        <note>ligand shared between dimeric partners</note>
    </ligand>
</feature>
<feature type="binding site" evidence="1">
    <location>
        <position position="224"/>
    </location>
    <ligand>
        <name>(6R)-5,10-methylene-5,6,7,8-tetrahydrofolate</name>
        <dbReference type="ChEBI" id="CHEBI:15636"/>
    </ligand>
</feature>
<feature type="binding site" description="in other chain" evidence="1">
    <location>
        <position position="232"/>
    </location>
    <ligand>
        <name>dUMP</name>
        <dbReference type="ChEBI" id="CHEBI:246422"/>
        <note>ligand shared between dimeric partners</note>
    </ligand>
</feature>
<feature type="binding site" description="in other chain" evidence="1">
    <location>
        <begin position="262"/>
        <end position="264"/>
    </location>
    <ligand>
        <name>dUMP</name>
        <dbReference type="ChEBI" id="CHEBI:246422"/>
        <note>ligand shared between dimeric partners</note>
    </ligand>
</feature>
<feature type="binding site" evidence="1">
    <location>
        <position position="318"/>
    </location>
    <ligand>
        <name>(6R)-5,10-methylene-5,6,7,8-tetrahydrofolate</name>
        <dbReference type="ChEBI" id="CHEBI:15636"/>
    </ligand>
</feature>
<evidence type="ECO:0000255" key="1">
    <source>
        <dbReference type="HAMAP-Rule" id="MF_00008"/>
    </source>
</evidence>
<comment type="function">
    <text evidence="1">Catalyzes the reductive methylation of 2'-deoxyuridine-5'-monophosphate (dUMP) to 2'-deoxythymidine-5'-monophosphate (dTMP) while utilizing 5,10-methylenetetrahydrofolate (mTHF) as the methyl donor and reductant in the reaction, yielding dihydrofolate (DHF) as a by-product. This enzymatic reaction provides an intracellular de novo source of dTMP, an essential precursor for DNA biosynthesis.</text>
</comment>
<comment type="catalytic activity">
    <reaction evidence="1">
        <text>dUMP + (6R)-5,10-methylene-5,6,7,8-tetrahydrofolate = 7,8-dihydrofolate + dTMP</text>
        <dbReference type="Rhea" id="RHEA:12104"/>
        <dbReference type="ChEBI" id="CHEBI:15636"/>
        <dbReference type="ChEBI" id="CHEBI:57451"/>
        <dbReference type="ChEBI" id="CHEBI:63528"/>
        <dbReference type="ChEBI" id="CHEBI:246422"/>
        <dbReference type="EC" id="2.1.1.45"/>
    </reaction>
</comment>
<comment type="pathway">
    <text evidence="1">Pyrimidine metabolism; dTTP biosynthesis.</text>
</comment>
<comment type="subunit">
    <text evidence="1">Homodimer.</text>
</comment>
<comment type="subcellular location">
    <subcellularLocation>
        <location evidence="1">Cytoplasm</location>
    </subcellularLocation>
</comment>
<comment type="similarity">
    <text evidence="1">Belongs to the thymidylate synthase family. Bacterial-type ThyA subfamily.</text>
</comment>
<sequence length="319" mass="36992">MSRNEEQYLNLARRILETGASKMDRTKTGTHSIFGAQMRFDLSEGFPLLTSKKVAFGRIKSELLWFLRGDNNIRFLLQHHNHIWDEWPFKKWVESNEYKGPDMTDFGLRTQKDPIFAEQYKEQKKIFVDRILNDDEFSKKFGTIGDVYGKLWRHWPDANDDGSVDQITRLINEIKVNPNSRRLILTAWDPETTPFATLPSCHVMSQFYVVDGKISLQMYQRSADYFLGVPFNIASYSLLLSMVAAQTGLEVGEFIHTIGDAHIYNNHVDQIKEQLSKPTHKLPTLKLNPDVKSIFDYEMSDIKLENYIHEDVIKAPIAV</sequence>
<name>TYSY_OENOB</name>
<dbReference type="EC" id="2.1.1.45" evidence="1"/>
<dbReference type="EMBL" id="CP000411">
    <property type="protein sequence ID" value="ABJ56708.1"/>
    <property type="molecule type" value="Genomic_DNA"/>
</dbReference>
<dbReference type="RefSeq" id="WP_002818663.1">
    <property type="nucleotide sequence ID" value="NC_008528.1"/>
</dbReference>
<dbReference type="SMR" id="Q04FR4"/>
<dbReference type="STRING" id="203123.OEOE_0782"/>
<dbReference type="KEGG" id="ooe:OEOE_0782"/>
<dbReference type="eggNOG" id="COG0207">
    <property type="taxonomic scope" value="Bacteria"/>
</dbReference>
<dbReference type="HOGENOM" id="CLU_021669_0_0_9"/>
<dbReference type="UniPathway" id="UPA00575"/>
<dbReference type="Proteomes" id="UP000000774">
    <property type="component" value="Chromosome"/>
</dbReference>
<dbReference type="GO" id="GO:0005829">
    <property type="term" value="C:cytosol"/>
    <property type="evidence" value="ECO:0007669"/>
    <property type="project" value="TreeGrafter"/>
</dbReference>
<dbReference type="GO" id="GO:0004799">
    <property type="term" value="F:thymidylate synthase activity"/>
    <property type="evidence" value="ECO:0007669"/>
    <property type="project" value="UniProtKB-UniRule"/>
</dbReference>
<dbReference type="GO" id="GO:0006231">
    <property type="term" value="P:dTMP biosynthetic process"/>
    <property type="evidence" value="ECO:0007669"/>
    <property type="project" value="UniProtKB-UniRule"/>
</dbReference>
<dbReference type="GO" id="GO:0006235">
    <property type="term" value="P:dTTP biosynthetic process"/>
    <property type="evidence" value="ECO:0007669"/>
    <property type="project" value="UniProtKB-UniRule"/>
</dbReference>
<dbReference type="GO" id="GO:0032259">
    <property type="term" value="P:methylation"/>
    <property type="evidence" value="ECO:0007669"/>
    <property type="project" value="UniProtKB-KW"/>
</dbReference>
<dbReference type="CDD" id="cd00351">
    <property type="entry name" value="TS_Pyrimidine_HMase"/>
    <property type="match status" value="1"/>
</dbReference>
<dbReference type="Gene3D" id="3.30.572.10">
    <property type="entry name" value="Thymidylate synthase/dCMP hydroxymethylase domain"/>
    <property type="match status" value="1"/>
</dbReference>
<dbReference type="HAMAP" id="MF_00008">
    <property type="entry name" value="Thymidy_synth_bact"/>
    <property type="match status" value="1"/>
</dbReference>
<dbReference type="InterPro" id="IPR045097">
    <property type="entry name" value="Thymidate_synth/dCMP_Mease"/>
</dbReference>
<dbReference type="InterPro" id="IPR023451">
    <property type="entry name" value="Thymidate_synth/dCMP_Mease_dom"/>
</dbReference>
<dbReference type="InterPro" id="IPR036926">
    <property type="entry name" value="Thymidate_synth/dCMP_Mease_sf"/>
</dbReference>
<dbReference type="InterPro" id="IPR000398">
    <property type="entry name" value="Thymidylate_synthase"/>
</dbReference>
<dbReference type="NCBIfam" id="NF002496">
    <property type="entry name" value="PRK01827.1-2"/>
    <property type="match status" value="1"/>
</dbReference>
<dbReference type="NCBIfam" id="TIGR03284">
    <property type="entry name" value="thym_sym"/>
    <property type="match status" value="1"/>
</dbReference>
<dbReference type="PANTHER" id="PTHR11548:SF9">
    <property type="entry name" value="THYMIDYLATE SYNTHASE"/>
    <property type="match status" value="1"/>
</dbReference>
<dbReference type="PANTHER" id="PTHR11548">
    <property type="entry name" value="THYMIDYLATE SYNTHASE 1"/>
    <property type="match status" value="1"/>
</dbReference>
<dbReference type="Pfam" id="PF00303">
    <property type="entry name" value="Thymidylat_synt"/>
    <property type="match status" value="1"/>
</dbReference>
<dbReference type="PRINTS" id="PR00108">
    <property type="entry name" value="THYMDSNTHASE"/>
</dbReference>
<dbReference type="SUPFAM" id="SSF55831">
    <property type="entry name" value="Thymidylate synthase/dCMP hydroxymethylase"/>
    <property type="match status" value="1"/>
</dbReference>